<feature type="chain" id="PRO_0000100721" description="POU domain, class 3, transcription factor 1">
    <location>
        <begin position="1"/>
        <end position="449"/>
    </location>
</feature>
<feature type="domain" description="POU-specific" evidence="3">
    <location>
        <begin position="245"/>
        <end position="319"/>
    </location>
</feature>
<feature type="DNA-binding region" description="Homeobox" evidence="2">
    <location>
        <begin position="337"/>
        <end position="396"/>
    </location>
</feature>
<feature type="region of interest" description="Disordered" evidence="4">
    <location>
        <begin position="1"/>
        <end position="22"/>
    </location>
</feature>
<feature type="region of interest" description="Disordered" evidence="4">
    <location>
        <begin position="76"/>
        <end position="108"/>
    </location>
</feature>
<feature type="region of interest" description="Disordered" evidence="4">
    <location>
        <begin position="132"/>
        <end position="152"/>
    </location>
</feature>
<feature type="region of interest" description="Disordered" evidence="4">
    <location>
        <begin position="184"/>
        <end position="251"/>
    </location>
</feature>
<feature type="region of interest" description="Disordered" evidence="4">
    <location>
        <begin position="393"/>
        <end position="449"/>
    </location>
</feature>
<feature type="compositionally biased region" description="Gly residues" evidence="4">
    <location>
        <begin position="11"/>
        <end position="20"/>
    </location>
</feature>
<feature type="compositionally biased region" description="Gly residues" evidence="4">
    <location>
        <begin position="93"/>
        <end position="108"/>
    </location>
</feature>
<feature type="compositionally biased region" description="Low complexity" evidence="4">
    <location>
        <begin position="132"/>
        <end position="143"/>
    </location>
</feature>
<feature type="compositionally biased region" description="Basic and acidic residues" evidence="4">
    <location>
        <begin position="188"/>
        <end position="197"/>
    </location>
</feature>
<feature type="compositionally biased region" description="Low complexity" evidence="4">
    <location>
        <begin position="218"/>
        <end position="230"/>
    </location>
</feature>
<feature type="compositionally biased region" description="Pro residues" evidence="4">
    <location>
        <begin position="425"/>
        <end position="434"/>
    </location>
</feature>
<feature type="sequence conflict" description="In Ref. 2; CAA40720." evidence="9" ref="2">
    <location>
        <position position="35"/>
    </location>
</feature>
<feature type="helix" evidence="10">
    <location>
        <begin position="250"/>
        <end position="266"/>
    </location>
</feature>
<feature type="helix" evidence="10">
    <location>
        <begin position="271"/>
        <end position="282"/>
    </location>
</feature>
<feature type="helix" evidence="10">
    <location>
        <begin position="288"/>
        <end position="295"/>
    </location>
</feature>
<feature type="helix" evidence="10">
    <location>
        <begin position="301"/>
        <end position="318"/>
    </location>
</feature>
<feature type="helix" evidence="10">
    <location>
        <begin position="346"/>
        <end position="358"/>
    </location>
</feature>
<feature type="helix" evidence="10">
    <location>
        <begin position="364"/>
        <end position="374"/>
    </location>
</feature>
<feature type="helix" evidence="10">
    <location>
        <begin position="378"/>
        <end position="392"/>
    </location>
</feature>
<dbReference type="EMBL" id="X54628">
    <property type="protein sequence ID" value="CAA38445.1"/>
    <property type="molecule type" value="mRNA"/>
</dbReference>
<dbReference type="EMBL" id="X56959">
    <property type="protein sequence ID" value="CAA40280.1"/>
    <property type="molecule type" value="mRNA"/>
</dbReference>
<dbReference type="EMBL" id="X57482">
    <property type="protein sequence ID" value="CAA40720.1"/>
    <property type="molecule type" value="mRNA"/>
</dbReference>
<dbReference type="EMBL" id="M88302">
    <property type="protein sequence ID" value="AAA39963.1"/>
    <property type="molecule type" value="Genomic_DNA"/>
</dbReference>
<dbReference type="CCDS" id="CCDS57296.1"/>
<dbReference type="PIR" id="S30205">
    <property type="entry name" value="S30205"/>
</dbReference>
<dbReference type="RefSeq" id="NP_035271.1">
    <property type="nucleotide sequence ID" value="NM_011141.2"/>
</dbReference>
<dbReference type="PDB" id="2XSD">
    <property type="method" value="X-ray"/>
    <property type="resolution" value="2.05 A"/>
    <property type="chains" value="C=240-402"/>
</dbReference>
<dbReference type="PDBsum" id="2XSD"/>
<dbReference type="SMR" id="P21952"/>
<dbReference type="BioGRID" id="202305">
    <property type="interactions" value="1"/>
</dbReference>
<dbReference type="FunCoup" id="P21952">
    <property type="interactions" value="643"/>
</dbReference>
<dbReference type="STRING" id="10090.ENSMUSP00000137374"/>
<dbReference type="PhosphoSitePlus" id="P21952"/>
<dbReference type="PaxDb" id="10090-ENSMUSP00000137374"/>
<dbReference type="PeptideAtlas" id="P21952"/>
<dbReference type="ProteomicsDB" id="289354"/>
<dbReference type="Antibodypedia" id="17662">
    <property type="antibodies" value="266 antibodies from 34 providers"/>
</dbReference>
<dbReference type="DNASU" id="18991"/>
<dbReference type="Ensembl" id="ENSMUST00000053491.9">
    <property type="protein sequence ID" value="ENSMUSP00000137374.2"/>
    <property type="gene ID" value="ENSMUSG00000090125.4"/>
</dbReference>
<dbReference type="GeneID" id="18991"/>
<dbReference type="KEGG" id="mmu:18991"/>
<dbReference type="UCSC" id="uc029uzh.1">
    <property type="organism name" value="mouse"/>
</dbReference>
<dbReference type="AGR" id="MGI:101896"/>
<dbReference type="CTD" id="5453"/>
<dbReference type="MGI" id="MGI:101896">
    <property type="gene designation" value="Pou3f1"/>
</dbReference>
<dbReference type="VEuPathDB" id="HostDB:ENSMUSG00000090125"/>
<dbReference type="eggNOG" id="KOG3802">
    <property type="taxonomic scope" value="Eukaryota"/>
</dbReference>
<dbReference type="GeneTree" id="ENSGT00940000163458"/>
<dbReference type="HOGENOM" id="CLU_013065_1_0_1"/>
<dbReference type="InParanoid" id="P21952"/>
<dbReference type="OMA" id="AHHGSWA"/>
<dbReference type="OrthoDB" id="6358449at2759"/>
<dbReference type="PhylomeDB" id="P21952"/>
<dbReference type="TreeFam" id="TF316413"/>
<dbReference type="BioGRID-ORCS" id="18991">
    <property type="hits" value="2 hits in 79 CRISPR screens"/>
</dbReference>
<dbReference type="ChiTaRS" id="Pou3f1">
    <property type="organism name" value="mouse"/>
</dbReference>
<dbReference type="PRO" id="PR:P21952"/>
<dbReference type="Proteomes" id="UP000000589">
    <property type="component" value="Chromosome 4"/>
</dbReference>
<dbReference type="RNAct" id="P21952">
    <property type="molecule type" value="protein"/>
</dbReference>
<dbReference type="Bgee" id="ENSMUSG00000090125">
    <property type="expression patterns" value="Expressed in CA1 field of hippocampus and 164 other cell types or tissues"/>
</dbReference>
<dbReference type="GO" id="GO:0005654">
    <property type="term" value="C:nucleoplasm"/>
    <property type="evidence" value="ECO:0000304"/>
    <property type="project" value="Reactome"/>
</dbReference>
<dbReference type="GO" id="GO:0005634">
    <property type="term" value="C:nucleus"/>
    <property type="evidence" value="ECO:0000314"/>
    <property type="project" value="UniProtKB"/>
</dbReference>
<dbReference type="GO" id="GO:0005667">
    <property type="term" value="C:transcription regulator complex"/>
    <property type="evidence" value="ECO:0000314"/>
    <property type="project" value="MGI"/>
</dbReference>
<dbReference type="GO" id="GO:0003677">
    <property type="term" value="F:DNA binding"/>
    <property type="evidence" value="ECO:0000314"/>
    <property type="project" value="MGI"/>
</dbReference>
<dbReference type="GO" id="GO:0000981">
    <property type="term" value="F:DNA-binding transcription factor activity, RNA polymerase II-specific"/>
    <property type="evidence" value="ECO:0000266"/>
    <property type="project" value="MGI"/>
</dbReference>
<dbReference type="GO" id="GO:0043565">
    <property type="term" value="F:sequence-specific DNA binding"/>
    <property type="evidence" value="ECO:0000266"/>
    <property type="project" value="MGI"/>
</dbReference>
<dbReference type="GO" id="GO:1990837">
    <property type="term" value="F:sequence-specific double-stranded DNA binding"/>
    <property type="evidence" value="ECO:0007669"/>
    <property type="project" value="Ensembl"/>
</dbReference>
<dbReference type="GO" id="GO:0008544">
    <property type="term" value="P:epidermis development"/>
    <property type="evidence" value="ECO:0000316"/>
    <property type="project" value="MGI"/>
</dbReference>
<dbReference type="GO" id="GO:0030900">
    <property type="term" value="P:forebrain development"/>
    <property type="evidence" value="ECO:0000315"/>
    <property type="project" value="MGI"/>
</dbReference>
<dbReference type="GO" id="GO:0030216">
    <property type="term" value="P:keratinocyte differentiation"/>
    <property type="evidence" value="ECO:0000316"/>
    <property type="project" value="MGI"/>
</dbReference>
<dbReference type="GO" id="GO:0042552">
    <property type="term" value="P:myelination"/>
    <property type="evidence" value="ECO:0000315"/>
    <property type="project" value="MGI"/>
</dbReference>
<dbReference type="GO" id="GO:0022011">
    <property type="term" value="P:myelination in peripheral nervous system"/>
    <property type="evidence" value="ECO:0000316"/>
    <property type="project" value="MGI"/>
</dbReference>
<dbReference type="GO" id="GO:0045893">
    <property type="term" value="P:positive regulation of DNA-templated transcription"/>
    <property type="evidence" value="ECO:0000314"/>
    <property type="project" value="UniProtKB"/>
</dbReference>
<dbReference type="GO" id="GO:0010628">
    <property type="term" value="P:positive regulation of gene expression"/>
    <property type="evidence" value="ECO:0000314"/>
    <property type="project" value="UniProtKB"/>
</dbReference>
<dbReference type="GO" id="GO:0045944">
    <property type="term" value="P:positive regulation of transcription by RNA polymerase II"/>
    <property type="evidence" value="ECO:0000266"/>
    <property type="project" value="MGI"/>
</dbReference>
<dbReference type="GO" id="GO:0014044">
    <property type="term" value="P:Schwann cell development"/>
    <property type="evidence" value="ECO:0000315"/>
    <property type="project" value="MGI"/>
</dbReference>
<dbReference type="CDD" id="cd00086">
    <property type="entry name" value="homeodomain"/>
    <property type="match status" value="1"/>
</dbReference>
<dbReference type="DisProt" id="DP02410"/>
<dbReference type="FunFam" id="1.10.10.60:FF:000005">
    <property type="entry name" value="POU domain protein"/>
    <property type="match status" value="1"/>
</dbReference>
<dbReference type="FunFam" id="1.10.260.40:FF:000001">
    <property type="entry name" value="POU domain protein"/>
    <property type="match status" value="1"/>
</dbReference>
<dbReference type="Gene3D" id="1.10.10.60">
    <property type="entry name" value="Homeodomain-like"/>
    <property type="match status" value="1"/>
</dbReference>
<dbReference type="Gene3D" id="1.10.260.40">
    <property type="entry name" value="lambda repressor-like DNA-binding domains"/>
    <property type="match status" value="1"/>
</dbReference>
<dbReference type="InterPro" id="IPR001356">
    <property type="entry name" value="HD"/>
</dbReference>
<dbReference type="InterPro" id="IPR017970">
    <property type="entry name" value="Homeobox_CS"/>
</dbReference>
<dbReference type="InterPro" id="IPR009057">
    <property type="entry name" value="Homeodomain-like_sf"/>
</dbReference>
<dbReference type="InterPro" id="IPR010982">
    <property type="entry name" value="Lambda_DNA-bd_dom_sf"/>
</dbReference>
<dbReference type="InterPro" id="IPR013847">
    <property type="entry name" value="POU"/>
</dbReference>
<dbReference type="InterPro" id="IPR000327">
    <property type="entry name" value="POU_dom"/>
</dbReference>
<dbReference type="InterPro" id="IPR050255">
    <property type="entry name" value="POU_domain_TF"/>
</dbReference>
<dbReference type="InterPro" id="IPR016362">
    <property type="entry name" value="TF_POU_3"/>
</dbReference>
<dbReference type="PANTHER" id="PTHR11636">
    <property type="entry name" value="POU DOMAIN"/>
    <property type="match status" value="1"/>
</dbReference>
<dbReference type="PANTHER" id="PTHR11636:SF75">
    <property type="entry name" value="POU DOMAIN, CLASS 3, TRANSCRIPTION FACTOR 1"/>
    <property type="match status" value="1"/>
</dbReference>
<dbReference type="Pfam" id="PF00046">
    <property type="entry name" value="Homeodomain"/>
    <property type="match status" value="1"/>
</dbReference>
<dbReference type="Pfam" id="PF00157">
    <property type="entry name" value="Pou"/>
    <property type="match status" value="1"/>
</dbReference>
<dbReference type="PIRSF" id="PIRSF002629">
    <property type="entry name" value="Transcription_factor_POU"/>
    <property type="match status" value="1"/>
</dbReference>
<dbReference type="PRINTS" id="PR00028">
    <property type="entry name" value="POUDOMAIN"/>
</dbReference>
<dbReference type="SMART" id="SM00389">
    <property type="entry name" value="HOX"/>
    <property type="match status" value="1"/>
</dbReference>
<dbReference type="SMART" id="SM00352">
    <property type="entry name" value="POU"/>
    <property type="match status" value="1"/>
</dbReference>
<dbReference type="SUPFAM" id="SSF46689">
    <property type="entry name" value="Homeodomain-like"/>
    <property type="match status" value="1"/>
</dbReference>
<dbReference type="SUPFAM" id="SSF47413">
    <property type="entry name" value="lambda repressor-like DNA-binding domains"/>
    <property type="match status" value="1"/>
</dbReference>
<dbReference type="PROSITE" id="PS00027">
    <property type="entry name" value="HOMEOBOX_1"/>
    <property type="match status" value="1"/>
</dbReference>
<dbReference type="PROSITE" id="PS50071">
    <property type="entry name" value="HOMEOBOX_2"/>
    <property type="match status" value="1"/>
</dbReference>
<dbReference type="PROSITE" id="PS00035">
    <property type="entry name" value="POU_1"/>
    <property type="match status" value="1"/>
</dbReference>
<dbReference type="PROSITE" id="PS00465">
    <property type="entry name" value="POU_2"/>
    <property type="match status" value="1"/>
</dbReference>
<dbReference type="PROSITE" id="PS51179">
    <property type="entry name" value="POU_3"/>
    <property type="match status" value="1"/>
</dbReference>
<gene>
    <name type="primary">Pou3f1</name>
    <name type="synonym">Oct6</name>
    <name type="synonym">Otf-6</name>
    <name type="synonym">Otf6</name>
    <name type="synonym">Scip</name>
</gene>
<protein>
    <recommendedName>
        <fullName>POU domain, class 3, transcription factor 1</fullName>
    </recommendedName>
    <alternativeName>
        <fullName>Octamer-binding protein 6</fullName>
        <shortName>Oct-6</shortName>
    </alternativeName>
    <alternativeName>
        <fullName>Octamer-binding transcription factor 6</fullName>
        <shortName>OTF-6</shortName>
    </alternativeName>
    <alternativeName>
        <fullName>POU domain transcription factor SCIP</fullName>
    </alternativeName>
</protein>
<organism>
    <name type="scientific">Mus musculus</name>
    <name type="common">Mouse</name>
    <dbReference type="NCBI Taxonomy" id="10090"/>
    <lineage>
        <taxon>Eukaryota</taxon>
        <taxon>Metazoa</taxon>
        <taxon>Chordata</taxon>
        <taxon>Craniata</taxon>
        <taxon>Vertebrata</taxon>
        <taxon>Euteleostomi</taxon>
        <taxon>Mammalia</taxon>
        <taxon>Eutheria</taxon>
        <taxon>Euarchontoglires</taxon>
        <taxon>Glires</taxon>
        <taxon>Rodentia</taxon>
        <taxon>Myomorpha</taxon>
        <taxon>Muroidea</taxon>
        <taxon>Muridae</taxon>
        <taxon>Murinae</taxon>
        <taxon>Mus</taxon>
        <taxon>Mus</taxon>
    </lineage>
</organism>
<comment type="function">
    <text evidence="1 6 7 8">Transcription factor that binds to the octamer motif (5'-ATTTGCAT-3') (PubMed:1976514, PubMed:1979677). Acts as a transcriptional activator when binding cooperatively with SOX4, SOX11, or SOX12 to gene promoters (PubMed:18505825). Acts as a transcriptional repressor of myelin-specific genes (By similarity).</text>
</comment>
<comment type="subcellular location">
    <subcellularLocation>
        <location evidence="8">Nucleus</location>
    </subcellularLocation>
</comment>
<comment type="developmental stage">
    <text evidence="5 8">Expressed in embryonal stem cells and in the developing brain (PubMed:1979677). Down-regulated in embryonic stem cells upon differentiation (PubMed:1979677). Expressed in the sciatic nerves at postnatal days P6 to P12 (PubMed:10068633).</text>
</comment>
<comment type="similarity">
    <text evidence="9">Belongs to the POU transcription factor family. Class-3 subfamily.</text>
</comment>
<accession>P21952</accession>
<name>PO3F1_MOUSE</name>
<reference key="1">
    <citation type="journal article" date="1990" name="Nucleic Acids Res.">
        <title>The octamer binding factor Oct6: cDNA cloning and expression in early embryonic cells.</title>
        <authorList>
            <person name="Meijer D."/>
            <person name="Graus A."/>
            <person name="Kraay R."/>
            <person name="Langeveld A."/>
            <person name="Mulder M.P."/>
            <person name="Grosveld G."/>
        </authorList>
    </citation>
    <scope>NUCLEOTIDE SEQUENCE [MRNA]</scope>
    <scope>FUNCTION</scope>
    <scope>SUBCELLULAR LOCATION</scope>
    <scope>DEVELOPMENTAL STAGE</scope>
    <source>
        <strain>C57BL/6 X CBA</strain>
        <tissue>Brain</tissue>
    </source>
</reference>
<reference key="2">
    <citation type="journal article" date="1990" name="EMBO J.">
        <title>Oct-6: a POU transcription factor expressed in embryonal stem cells and in the developing brain.</title>
        <authorList>
            <person name="Suzuki N."/>
            <person name="Rohdewohld H."/>
            <person name="Neuman T."/>
            <person name="Gruss P."/>
            <person name="Schoeler H.R."/>
        </authorList>
    </citation>
    <scope>NUCLEOTIDE SEQUENCE [MRNA]</scope>
    <scope>FUNCTION</scope>
    <source>
        <tissue>Brain</tissue>
    </source>
</reference>
<reference key="3">
    <citation type="journal article" date="1991" name="Nucleic Acids Res.">
        <title>Nucleotide sequence of mouse SCIP cDNA, a POU-domain transcription factor.</title>
        <authorList>
            <person name="Zimmerman E.C."/>
            <person name="Jones C.M."/>
            <person name="Fet V."/>
            <person name="Hogan B.L.M."/>
            <person name="Magnuson M.A."/>
        </authorList>
    </citation>
    <scope>NUCLEOTIDE SEQUENCE</scope>
</reference>
<reference key="4">
    <citation type="journal article" date="1992" name="Proc. Natl. Acad. Sci. U.S.A.">
        <title>Structure and evolution of four POU domain genes expressed in mouse brain.</title>
        <authorList>
            <person name="Hara Y."/>
            <person name="Rovescalli C."/>
            <person name="Kim Y."/>
            <person name="Nirenberg M."/>
        </authorList>
    </citation>
    <scope>NUCLEOTIDE SEQUENCE [GENOMIC DNA]</scope>
</reference>
<reference key="5">
    <citation type="journal article" date="1999" name="Development">
        <title>Krox-20 controls SCIP expression, cell cycle exit and susceptibility to apoptosis in developing myelinating Schwann cells.</title>
        <authorList>
            <person name="Zorick T.S."/>
            <person name="Syroid D.E."/>
            <person name="Brown A."/>
            <person name="Gridley T."/>
            <person name="Lemke G."/>
        </authorList>
    </citation>
    <scope>DEVELOPMENTAL STAGE</scope>
</reference>
<reference key="6">
    <citation type="journal article" date="2008" name="Mol. Cell. Biol.">
        <title>Sox12 deletion in the mouse reveals nonreciprocal redundancy with the related Sox4 and Sox11 transcription factors.</title>
        <authorList>
            <person name="Hoser M."/>
            <person name="Potzner M.R."/>
            <person name="Koch J.M."/>
            <person name="Boesl M.R."/>
            <person name="Wegner M."/>
            <person name="Sock E."/>
        </authorList>
    </citation>
    <scope>FUNCTION</scope>
</reference>
<sequence>MATTAQYLPRGPGGGAGGTGPLMHPDAAAAAAAAAERLHAGAAYREVQKLMHHEWLGAGAGHPVGLAHPQWLPTGGGGGGDWAGGPHLEHGKAGGGGTGRADDGGGGGGFHARLVHQGAAHAGAAWAQGGTAHHLGPAMSPSPGAGGGHQPQPLGLYAQAAYPGGGGGGLAGMLAAGGGGAGPGLHHALHEDGHEAQLEPSPPPHLGAHGHAHGHAHAGGLHAAAAHLHPGAGGGGSSVGEHSDEDAPSSDDLEQFAKQFKQRRIKLGFTQADVGLALGTLYGNVFSQTTICRFEALQLSFKNMCKLKPLLNKWLEETDSSSGSPTNLDKIAAQGRKRKKRTSIEVGVKGALESHFLKCPKPSAHEITGLADSLQLEKEVVRVWFCNRRQKEKRMTPAAGAGHPPMDDVYAPGELGPGGGSASPPSAPPPPPPAALHHHHHHTLPGSVQ</sequence>
<keyword id="KW-0002">3D-structure</keyword>
<keyword id="KW-0010">Activator</keyword>
<keyword id="KW-0238">DNA-binding</keyword>
<keyword id="KW-0371">Homeobox</keyword>
<keyword id="KW-0539">Nucleus</keyword>
<keyword id="KW-1185">Reference proteome</keyword>
<keyword id="KW-0678">Repressor</keyword>
<keyword id="KW-0804">Transcription</keyword>
<keyword id="KW-0805">Transcription regulation</keyword>
<proteinExistence type="evidence at protein level"/>
<evidence type="ECO:0000250" key="1">
    <source>
        <dbReference type="UniProtKB" id="P20267"/>
    </source>
</evidence>
<evidence type="ECO:0000255" key="2">
    <source>
        <dbReference type="PROSITE-ProRule" id="PRU00108"/>
    </source>
</evidence>
<evidence type="ECO:0000255" key="3">
    <source>
        <dbReference type="PROSITE-ProRule" id="PRU00530"/>
    </source>
</evidence>
<evidence type="ECO:0000256" key="4">
    <source>
        <dbReference type="SAM" id="MobiDB-lite"/>
    </source>
</evidence>
<evidence type="ECO:0000269" key="5">
    <source>
    </source>
</evidence>
<evidence type="ECO:0000269" key="6">
    <source>
    </source>
</evidence>
<evidence type="ECO:0000269" key="7">
    <source>
    </source>
</evidence>
<evidence type="ECO:0000269" key="8">
    <source>
    </source>
</evidence>
<evidence type="ECO:0000305" key="9"/>
<evidence type="ECO:0007829" key="10">
    <source>
        <dbReference type="PDB" id="2XSD"/>
    </source>
</evidence>